<proteinExistence type="inferred from homology"/>
<gene>
    <name evidence="1" type="primary">leuD</name>
    <name type="ordered locus">BSUIS_B0875</name>
</gene>
<dbReference type="EC" id="4.2.1.33" evidence="1"/>
<dbReference type="EMBL" id="CP000912">
    <property type="protein sequence ID" value="ABY39834.1"/>
    <property type="molecule type" value="Genomic_DNA"/>
</dbReference>
<dbReference type="RefSeq" id="WP_002965763.1">
    <property type="nucleotide sequence ID" value="NC_010167.1"/>
</dbReference>
<dbReference type="SMR" id="A9WVP8"/>
<dbReference type="GeneID" id="97535045"/>
<dbReference type="KEGG" id="bmt:BSUIS_B0875"/>
<dbReference type="HOGENOM" id="CLU_081378_0_3_5"/>
<dbReference type="UniPathway" id="UPA00048">
    <property type="reaction ID" value="UER00071"/>
</dbReference>
<dbReference type="Proteomes" id="UP000008545">
    <property type="component" value="Chromosome II"/>
</dbReference>
<dbReference type="GO" id="GO:0009316">
    <property type="term" value="C:3-isopropylmalate dehydratase complex"/>
    <property type="evidence" value="ECO:0007669"/>
    <property type="project" value="InterPro"/>
</dbReference>
<dbReference type="GO" id="GO:0003861">
    <property type="term" value="F:3-isopropylmalate dehydratase activity"/>
    <property type="evidence" value="ECO:0007669"/>
    <property type="project" value="UniProtKB-UniRule"/>
</dbReference>
<dbReference type="GO" id="GO:0009098">
    <property type="term" value="P:L-leucine biosynthetic process"/>
    <property type="evidence" value="ECO:0007669"/>
    <property type="project" value="UniProtKB-UniRule"/>
</dbReference>
<dbReference type="CDD" id="cd01577">
    <property type="entry name" value="IPMI_Swivel"/>
    <property type="match status" value="1"/>
</dbReference>
<dbReference type="FunFam" id="3.20.19.10:FF:000003">
    <property type="entry name" value="3-isopropylmalate dehydratase small subunit"/>
    <property type="match status" value="1"/>
</dbReference>
<dbReference type="Gene3D" id="3.20.19.10">
    <property type="entry name" value="Aconitase, domain 4"/>
    <property type="match status" value="1"/>
</dbReference>
<dbReference type="HAMAP" id="MF_01031">
    <property type="entry name" value="LeuD_type1"/>
    <property type="match status" value="1"/>
</dbReference>
<dbReference type="InterPro" id="IPR004431">
    <property type="entry name" value="3-IsopropMal_deHydase_ssu"/>
</dbReference>
<dbReference type="InterPro" id="IPR015928">
    <property type="entry name" value="Aconitase/3IPM_dehydase_swvl"/>
</dbReference>
<dbReference type="InterPro" id="IPR000573">
    <property type="entry name" value="AconitaseA/IPMdHydase_ssu_swvl"/>
</dbReference>
<dbReference type="InterPro" id="IPR033940">
    <property type="entry name" value="IPMI_Swivel"/>
</dbReference>
<dbReference type="InterPro" id="IPR050075">
    <property type="entry name" value="LeuD"/>
</dbReference>
<dbReference type="NCBIfam" id="TIGR00171">
    <property type="entry name" value="leuD"/>
    <property type="match status" value="1"/>
</dbReference>
<dbReference type="NCBIfam" id="NF002458">
    <property type="entry name" value="PRK01641.1"/>
    <property type="match status" value="1"/>
</dbReference>
<dbReference type="PANTHER" id="PTHR43345:SF5">
    <property type="entry name" value="3-ISOPROPYLMALATE DEHYDRATASE SMALL SUBUNIT"/>
    <property type="match status" value="1"/>
</dbReference>
<dbReference type="PANTHER" id="PTHR43345">
    <property type="entry name" value="3-ISOPROPYLMALATE DEHYDRATASE SMALL SUBUNIT 2-RELATED-RELATED"/>
    <property type="match status" value="1"/>
</dbReference>
<dbReference type="Pfam" id="PF00694">
    <property type="entry name" value="Aconitase_C"/>
    <property type="match status" value="1"/>
</dbReference>
<dbReference type="SUPFAM" id="SSF52016">
    <property type="entry name" value="LeuD/IlvD-like"/>
    <property type="match status" value="1"/>
</dbReference>
<organism>
    <name type="scientific">Brucella suis (strain ATCC 23445 / NCTC 10510)</name>
    <dbReference type="NCBI Taxonomy" id="470137"/>
    <lineage>
        <taxon>Bacteria</taxon>
        <taxon>Pseudomonadati</taxon>
        <taxon>Pseudomonadota</taxon>
        <taxon>Alphaproteobacteria</taxon>
        <taxon>Hyphomicrobiales</taxon>
        <taxon>Brucellaceae</taxon>
        <taxon>Brucella/Ochrobactrum group</taxon>
        <taxon>Brucella</taxon>
    </lineage>
</organism>
<sequence>MDKFTKLTGVAAPLPIVNIDTDMIIPKDYLKTIKRTGLGKGLFAEMRFNEDGSENPDFVLNKPGYRKAQILVAGDNFGCGSSREHAPWALLDYGIRCVISTSFADIFYNNCFKNGILPIKVAQEDLDKLMDDASRGANATLTIDLETKQIHGPDGGTISFDLDDFKRHCLLNGLDDIGLTMEKAKSIDTFEAKNAEERPWA</sequence>
<accession>A9WVP8</accession>
<comment type="function">
    <text evidence="1">Catalyzes the isomerization between 2-isopropylmalate and 3-isopropylmalate, via the formation of 2-isopropylmaleate.</text>
</comment>
<comment type="catalytic activity">
    <reaction evidence="1">
        <text>(2R,3S)-3-isopropylmalate = (2S)-2-isopropylmalate</text>
        <dbReference type="Rhea" id="RHEA:32287"/>
        <dbReference type="ChEBI" id="CHEBI:1178"/>
        <dbReference type="ChEBI" id="CHEBI:35121"/>
        <dbReference type="EC" id="4.2.1.33"/>
    </reaction>
</comment>
<comment type="pathway">
    <text evidence="1">Amino-acid biosynthesis; L-leucine biosynthesis; L-leucine from 3-methyl-2-oxobutanoate: step 2/4.</text>
</comment>
<comment type="subunit">
    <text evidence="1">Heterodimer of LeuC and LeuD.</text>
</comment>
<comment type="similarity">
    <text evidence="1">Belongs to the LeuD family. LeuD type 1 subfamily.</text>
</comment>
<evidence type="ECO:0000255" key="1">
    <source>
        <dbReference type="HAMAP-Rule" id="MF_01031"/>
    </source>
</evidence>
<reference key="1">
    <citation type="submission" date="2007-12" db="EMBL/GenBank/DDBJ databases">
        <title>Brucella suis ATCC 23445 whole genome shotgun sequencing project.</title>
        <authorList>
            <person name="Setubal J.C."/>
            <person name="Bowns C."/>
            <person name="Boyle S."/>
            <person name="Crasta O.R."/>
            <person name="Czar M.J."/>
            <person name="Dharmanolla C."/>
            <person name="Gillespie J.J."/>
            <person name="Kenyon R.W."/>
            <person name="Lu J."/>
            <person name="Mane S."/>
            <person name="Mohapatra S."/>
            <person name="Nagrani S."/>
            <person name="Purkayastha A."/>
            <person name="Rajasimha H.K."/>
            <person name="Shallom J.M."/>
            <person name="Shallom S."/>
            <person name="Shukla M."/>
            <person name="Snyder E.E."/>
            <person name="Sobral B.W."/>
            <person name="Wattam A.R."/>
            <person name="Will R."/>
            <person name="Williams K."/>
            <person name="Yoo H."/>
            <person name="Bruce D."/>
            <person name="Detter C."/>
            <person name="Munk C."/>
            <person name="Brettin T.S."/>
        </authorList>
    </citation>
    <scope>NUCLEOTIDE SEQUENCE [LARGE SCALE GENOMIC DNA]</scope>
    <source>
        <strain>ATCC 23445 / NCTC 10510</strain>
    </source>
</reference>
<feature type="chain" id="PRO_1000084246" description="3-isopropylmalate dehydratase small subunit">
    <location>
        <begin position="1"/>
        <end position="201"/>
    </location>
</feature>
<protein>
    <recommendedName>
        <fullName evidence="1">3-isopropylmalate dehydratase small subunit</fullName>
        <ecNumber evidence="1">4.2.1.33</ecNumber>
    </recommendedName>
    <alternativeName>
        <fullName evidence="1">Alpha-IPM isomerase</fullName>
        <shortName evidence="1">IPMI</shortName>
    </alternativeName>
    <alternativeName>
        <fullName evidence="1">Isopropylmalate isomerase</fullName>
    </alternativeName>
</protein>
<keyword id="KW-0028">Amino-acid biosynthesis</keyword>
<keyword id="KW-0100">Branched-chain amino acid biosynthesis</keyword>
<keyword id="KW-0432">Leucine biosynthesis</keyword>
<keyword id="KW-0456">Lyase</keyword>
<name>LEUD_BRUSI</name>